<protein>
    <recommendedName>
        <fullName>Eggshell protein 1</fullName>
    </recommendedName>
</protein>
<gene>
    <name type="primary">ESG-1</name>
</gene>
<organism>
    <name type="scientific">Schistosoma japonicum</name>
    <name type="common">Blood fluke</name>
    <dbReference type="NCBI Taxonomy" id="6182"/>
    <lineage>
        <taxon>Eukaryota</taxon>
        <taxon>Metazoa</taxon>
        <taxon>Spiralia</taxon>
        <taxon>Lophotrochozoa</taxon>
        <taxon>Platyhelminthes</taxon>
        <taxon>Trematoda</taxon>
        <taxon>Digenea</taxon>
        <taxon>Strigeidida</taxon>
        <taxon>Schistosomatoidea</taxon>
        <taxon>Schistosomatidae</taxon>
        <taxon>Schistosoma</taxon>
    </lineage>
</organism>
<accession>P19470</accession>
<accession>Q03797</accession>
<feature type="signal peptide">
    <location>
        <begin position="1"/>
        <end position="27"/>
    </location>
</feature>
<feature type="chain" id="PRO_0000021150" description="Eggshell protein 1">
    <location>
        <begin position="28"/>
        <end position="212"/>
    </location>
</feature>
<feature type="region of interest" description="Disordered" evidence="1">
    <location>
        <begin position="155"/>
        <end position="212"/>
    </location>
</feature>
<feature type="compositionally biased region" description="Gly residues" evidence="1">
    <location>
        <begin position="163"/>
        <end position="205"/>
    </location>
</feature>
<feature type="sequence conflict" description="In Ref. 2; AAA29871." evidence="3" ref="2">
    <original>P</original>
    <variation>S</variation>
    <location>
        <position position="22"/>
    </location>
</feature>
<feature type="sequence conflict" description="In Ref. 2; AAA29871." evidence="3" ref="2">
    <location>
        <begin position="78"/>
        <end position="82"/>
    </location>
</feature>
<keyword id="KW-0677">Repeat</keyword>
<keyword id="KW-0732">Signal</keyword>
<reference key="1">
    <citation type="journal article" date="1990" name="Mol. Biochem. Parasitol.">
        <title>The gene family encoding eggshell proteins of Schistosoma japonicum.</title>
        <authorList>
            <person name="Henkle K.J."/>
            <person name="Cook G.A."/>
            <person name="Foster L.A."/>
            <person name="Engman D.M."/>
            <person name="Bobek L.A."/>
            <person name="Cain G.D."/>
            <person name="Donelson J.E."/>
        </authorList>
    </citation>
    <scope>NUCLEOTIDE SEQUENCE [GENOMIC DNA]</scope>
</reference>
<reference key="2">
    <citation type="journal article" date="1991" name="Exp. Parasitol.">
        <title>Schistosoma japonicum: analysis of eggshell protein genes, their expression, and comparison with similar genes from other schistosomes.</title>
        <authorList>
            <person name="Bobek L.A."/>
            <person name="Rekosh D.M."/>
            <person name="LoVerde P.T."/>
        </authorList>
    </citation>
    <scope>NUCLEOTIDE SEQUENCE [GENOMIC DNA]</scope>
    <scope>TISSUE SPECIFICITY</scope>
</reference>
<proteinExistence type="evidence at transcript level"/>
<evidence type="ECO:0000256" key="1">
    <source>
        <dbReference type="SAM" id="MobiDB-lite"/>
    </source>
</evidence>
<evidence type="ECO:0000269" key="2">
    <source>
    </source>
</evidence>
<evidence type="ECO:0000305" key="3"/>
<dbReference type="EMBL" id="M32281">
    <property type="protein sequence ID" value="AAA29875.1"/>
    <property type="molecule type" value="Genomic_DNA"/>
</dbReference>
<dbReference type="EMBL" id="M59318">
    <property type="protein sequence ID" value="AAA29871.1"/>
    <property type="molecule type" value="Genomic_DNA"/>
</dbReference>
<dbReference type="PIR" id="A44994">
    <property type="entry name" value="A44994"/>
</dbReference>
<dbReference type="PRINTS" id="PR01228">
    <property type="entry name" value="EGGSHELL"/>
</dbReference>
<comment type="tissue specificity">
    <text evidence="2">Detected only in mature female parasites.</text>
</comment>
<name>EGG1_SCHJA</name>
<sequence>MKSSLTLLFLAAIGYTIAYPPPSDYDSGYGGGGGGGGGGGYGGWCGGSDCYGGGNGGGGGGGGGNGGEYGGGYGDVYGGSYGGGSYGGGGYGDVYGGGCGGPDCYGGGNGGGNGGGGGCNGGGCGGGPDFYGKGYEDSYGGDSYGNDYYGDSNGRKNGHGKGGKGGNGGGGGKGGGKGGGNGKGNGKGGGGKNGGGKGGNGGKGGSYAPSYY</sequence>